<dbReference type="EC" id="6.-.-.-" evidence="1"/>
<dbReference type="EMBL" id="CH476736">
    <property type="protein sequence ID" value="EIE82159.1"/>
    <property type="molecule type" value="Genomic_DNA"/>
</dbReference>
<dbReference type="SMR" id="I1C129"/>
<dbReference type="STRING" id="246409.I1C129"/>
<dbReference type="VEuPathDB" id="FungiDB:RO3G_06864"/>
<dbReference type="eggNOG" id="ENOG502RX6M">
    <property type="taxonomic scope" value="Eukaryota"/>
</dbReference>
<dbReference type="InParanoid" id="I1C129"/>
<dbReference type="OMA" id="PLIAYIQ"/>
<dbReference type="OrthoDB" id="18772at4827"/>
<dbReference type="Proteomes" id="UP000009138">
    <property type="component" value="Unassembled WGS sequence"/>
</dbReference>
<dbReference type="GO" id="GO:0016881">
    <property type="term" value="F:acid-amino acid ligase activity"/>
    <property type="evidence" value="ECO:0007669"/>
    <property type="project" value="UniProtKB-ARBA"/>
</dbReference>
<dbReference type="GO" id="GO:0019290">
    <property type="term" value="P:siderophore biosynthetic process"/>
    <property type="evidence" value="ECO:0007669"/>
    <property type="project" value="InterPro"/>
</dbReference>
<dbReference type="Gene3D" id="1.10.510.40">
    <property type="match status" value="1"/>
</dbReference>
<dbReference type="InterPro" id="IPR007310">
    <property type="entry name" value="Aerobactin_biosyn_IucA/IucC_N"/>
</dbReference>
<dbReference type="InterPro" id="IPR022770">
    <property type="entry name" value="IucA/IucC-like_C"/>
</dbReference>
<dbReference type="InterPro" id="IPR037455">
    <property type="entry name" value="LucA/IucC-like"/>
</dbReference>
<dbReference type="PANTHER" id="PTHR34384">
    <property type="entry name" value="L-2,3-DIAMINOPROPANOATE--CITRATE LIGASE"/>
    <property type="match status" value="1"/>
</dbReference>
<dbReference type="PANTHER" id="PTHR34384:SF5">
    <property type="entry name" value="L-2,3-DIAMINOPROPANOATE--CITRATE LIGASE"/>
    <property type="match status" value="1"/>
</dbReference>
<dbReference type="Pfam" id="PF06276">
    <property type="entry name" value="FhuF"/>
    <property type="match status" value="1"/>
</dbReference>
<dbReference type="Pfam" id="PF04183">
    <property type="entry name" value="IucA_IucC"/>
    <property type="match status" value="1"/>
</dbReference>
<organism>
    <name type="scientific">Rhizopus delemar (strain RA 99-880 / ATCC MYA-4621 / FGSC 9543 / NRRL 43880)</name>
    <name type="common">Mucormycosis agent</name>
    <name type="synonym">Rhizopus arrhizus var. delemar</name>
    <dbReference type="NCBI Taxonomy" id="246409"/>
    <lineage>
        <taxon>Eukaryota</taxon>
        <taxon>Fungi</taxon>
        <taxon>Fungi incertae sedis</taxon>
        <taxon>Mucoromycota</taxon>
        <taxon>Mucoromycotina</taxon>
        <taxon>Mucoromycetes</taxon>
        <taxon>Mucorales</taxon>
        <taxon>Mucorineae</taxon>
        <taxon>Rhizopodaceae</taxon>
        <taxon>Rhizopus</taxon>
    </lineage>
</organism>
<sequence>MPVASSEYQNEHYASFATTSRLVTCLVSETLVPVFFVPVKSVDRNNQFIGLCLLLRPTTVKQESELPTNITASDILTVVPLRGLPILNNERVALFNGIRCPQIDLVDFLDMLPHIYSVESSGSLKSGDSLKQKTFDTLSAILDGNKTFDLVDGYSAVQLWNHFAQDLEINSKLREQIGQELGSSILFQKYTYDNPKPLPTLNSSTIKWEQSVVEGHATHPMHKARKSFPPMPPLNPGSYDLDHPAVRLVGIPRENAILRGEYEELSAPLVNALMDAGGNHKDIRAQYQNYVFIAIHELQLPNIQEKFKDAVIFSKEHQLNVEALASLRSVARPDILPGLSVKLCLGIKISSALRTVTPFTTYFGPGFSFNVVPKLTYDHEVLAIERELGTITYRHEDSDVAKHCSSVIREALEYDPKYQDDLFIPCGALVEKIQRPDTDETLVAHVWNLDTKEKRVEFLDRYVDFALRSFLPPCLINGVAFEAHGQNTLARFDRKTGLLKGFVIRDFGGVKAHNETLKKSAGVELDILPDSCVEAHSLEEVFKLLYHTLFHCQLQRLIRVLDLHYSGEGWEIVRKYLTQYVPKDHVMWPMFMESSKVPGKCLVRMKIDELYRDYIYRPVPNMIKYEPQSVPEAI</sequence>
<keyword id="KW-0436">Ligase</keyword>
<keyword id="KW-1185">Reference proteome</keyword>
<comment type="function">
    <text evidence="1">NRPS-independent siderophore synthetase that catalyzes the rhizoferrin biosynthesis from citrate and diaminobutane via an ATP-dependent condensation of citrate with diaminobutane followed by the addition of a second citrate to the monocitryl-diaminobutane intermediate (PubMed:28610916). Can also use as substrates the citrate and diaminobutane homologs oxaloacetic acid, diaminopropane, diaminobutane, diaminopentane, tricarballylic acid, hydroxylamine and ornithine (PubMed:28610916). Forms only a mono-substituted intermediate with oxaloacetic acid and diaminopentane whereas both mono-citryl intermediates and full rhizoferrin derivatives were detected when diaminopropane, and ornithine were used as substrates (PubMed:28610916). Tricarballylic acid only forms a rhizoferrin derivative, but no mono-substituted intermediate (PubMed:28610916).</text>
</comment>
<comment type="induction">
    <text evidence="1">Expression is repressed in iron-replete media (PubMed:28610916).</text>
</comment>
<evidence type="ECO:0000269" key="1">
    <source>
    </source>
</evidence>
<evidence type="ECO:0000303" key="2">
    <source>
    </source>
</evidence>
<proteinExistence type="evidence at protein level"/>
<feature type="chain" id="PRO_0000444443" description="NRPS-independent siderophore synthetase rfs">
    <location>
        <begin position="1"/>
        <end position="634"/>
    </location>
</feature>
<feature type="mutagenesis site" description="Does not affect the catalytic activity." evidence="1">
    <original>R</original>
    <variation>A</variation>
    <location>
        <position position="354"/>
    </location>
</feature>
<feature type="mutagenesis site" description="Impairs the catalytic activity." evidence="1">
    <original>H</original>
    <variation>A</variation>
    <location>
        <position position="484"/>
    </location>
</feature>
<feature type="mutagenesis site" description="Enables to accommodate serine in place of diaminobutane in the active site and significantly increases the catalytic activity." evidence="1">
    <original>L</original>
    <variation>R</variation>
    <location>
        <position position="544"/>
    </location>
</feature>
<reference key="1">
    <citation type="journal article" date="2009" name="PLoS Genet.">
        <title>Genomic analysis of the basal lineage fungus Rhizopus oryzae reveals a whole-genome duplication.</title>
        <authorList>
            <person name="Ma L.-J."/>
            <person name="Ibrahim A.S."/>
            <person name="Skory C."/>
            <person name="Grabherr M.G."/>
            <person name="Burger G."/>
            <person name="Butler M."/>
            <person name="Elias M."/>
            <person name="Idnurm A."/>
            <person name="Lang B.F."/>
            <person name="Sone T."/>
            <person name="Abe A."/>
            <person name="Calvo S.E."/>
            <person name="Corrochano L.M."/>
            <person name="Engels R."/>
            <person name="Fu J."/>
            <person name="Hansberg W."/>
            <person name="Kim J.-M."/>
            <person name="Kodira C.D."/>
            <person name="Koehrsen M.J."/>
            <person name="Liu B."/>
            <person name="Miranda-Saavedra D."/>
            <person name="O'Leary S."/>
            <person name="Ortiz-Castellanos L."/>
            <person name="Poulter R."/>
            <person name="Rodriguez-Romero J."/>
            <person name="Ruiz-Herrera J."/>
            <person name="Shen Y.-Q."/>
            <person name="Zeng Q."/>
            <person name="Galagan J."/>
            <person name="Birren B.W."/>
            <person name="Cuomo C.A."/>
            <person name="Wickes B.L."/>
        </authorList>
    </citation>
    <scope>NUCLEOTIDE SEQUENCE [LARGE SCALE GENOMIC DNA]</scope>
    <source>
        <strain>RA 99-880 / ATCC MYA-4621 / FGSC 9543 / NRRL 43880</strain>
    </source>
</reference>
<reference key="2">
    <citation type="journal article" date="2017" name="Int. J. Biochem. Cell Biol.">
        <title>The rhizoferrin biosynthetic gene in the fungal pathogen Rhizopus delemar is a novel member of the NIS gene family.</title>
        <authorList>
            <person name="Carroll C.S."/>
            <person name="Grieve C.L."/>
            <person name="Murugathasan I."/>
            <person name="Bennet A.J."/>
            <person name="Czekster C.M."/>
            <person name="Liu H."/>
            <person name="Naismith J."/>
            <person name="Moore M.M."/>
        </authorList>
    </citation>
    <scope>FUNCTION</scope>
    <scope>INDUCTION</scope>
    <scope>CATALYTIC ACTIVITY</scope>
    <scope>MUTAGENESIS OF ARG-354; HIS-484 AND LEU-544</scope>
</reference>
<protein>
    <recommendedName>
        <fullName evidence="2">NRPS-independent siderophore synthetase rfs</fullName>
        <shortName evidence="2">NIS rfs</shortName>
        <ecNumber evidence="1">6.-.-.-</ecNumber>
    </recommendedName>
    <alternativeName>
        <fullName evidence="2">Rhizoferrin biosynthesis protein rfs</fullName>
    </alternativeName>
</protein>
<accession>I1C129</accession>
<gene>
    <name evidence="2" type="primary">rfs</name>
    <name type="ORF">RO3G_06864</name>
</gene>
<name>RFS_RHIO9</name>